<reference key="1">
    <citation type="submission" date="1996-03" db="EMBL/GenBank/DDBJ databases">
        <authorList>
            <person name="Krogh S."/>
            <person name="O'Reilly M."/>
            <person name="Nolan N."/>
            <person name="Devine K.M."/>
        </authorList>
    </citation>
    <scope>NUCLEOTIDE SEQUENCE [GENOMIC DNA]</scope>
    <source>
        <strain>168</strain>
    </source>
</reference>
<reference key="2">
    <citation type="journal article" date="1994" name="J. Bacteriol.">
        <title>Genetic control of bacterial suicide: regulation of the induction of PBSX in Bacillus subtilis.</title>
        <authorList>
            <person name="McDonnell G.E."/>
            <person name="Wood H."/>
            <person name="Devine K.M."/>
            <person name="McConnell D.J."/>
        </authorList>
    </citation>
    <scope>NUCLEOTIDE SEQUENCE [GENOMIC DNA]</scope>
    <source>
        <strain>168 / SO113</strain>
    </source>
</reference>
<reference key="3">
    <citation type="journal article" date="1997" name="Nature">
        <title>The complete genome sequence of the Gram-positive bacterium Bacillus subtilis.</title>
        <authorList>
            <person name="Kunst F."/>
            <person name="Ogasawara N."/>
            <person name="Moszer I."/>
            <person name="Albertini A.M."/>
            <person name="Alloni G."/>
            <person name="Azevedo V."/>
            <person name="Bertero M.G."/>
            <person name="Bessieres P."/>
            <person name="Bolotin A."/>
            <person name="Borchert S."/>
            <person name="Borriss R."/>
            <person name="Boursier L."/>
            <person name="Brans A."/>
            <person name="Braun M."/>
            <person name="Brignell S.C."/>
            <person name="Bron S."/>
            <person name="Brouillet S."/>
            <person name="Bruschi C.V."/>
            <person name="Caldwell B."/>
            <person name="Capuano V."/>
            <person name="Carter N.M."/>
            <person name="Choi S.-K."/>
            <person name="Codani J.-J."/>
            <person name="Connerton I.F."/>
            <person name="Cummings N.J."/>
            <person name="Daniel R.A."/>
            <person name="Denizot F."/>
            <person name="Devine K.M."/>
            <person name="Duesterhoeft A."/>
            <person name="Ehrlich S.D."/>
            <person name="Emmerson P.T."/>
            <person name="Entian K.-D."/>
            <person name="Errington J."/>
            <person name="Fabret C."/>
            <person name="Ferrari E."/>
            <person name="Foulger D."/>
            <person name="Fritz C."/>
            <person name="Fujita M."/>
            <person name="Fujita Y."/>
            <person name="Fuma S."/>
            <person name="Galizzi A."/>
            <person name="Galleron N."/>
            <person name="Ghim S.-Y."/>
            <person name="Glaser P."/>
            <person name="Goffeau A."/>
            <person name="Golightly E.J."/>
            <person name="Grandi G."/>
            <person name="Guiseppi G."/>
            <person name="Guy B.J."/>
            <person name="Haga K."/>
            <person name="Haiech J."/>
            <person name="Harwood C.R."/>
            <person name="Henaut A."/>
            <person name="Hilbert H."/>
            <person name="Holsappel S."/>
            <person name="Hosono S."/>
            <person name="Hullo M.-F."/>
            <person name="Itaya M."/>
            <person name="Jones L.-M."/>
            <person name="Joris B."/>
            <person name="Karamata D."/>
            <person name="Kasahara Y."/>
            <person name="Klaerr-Blanchard M."/>
            <person name="Klein C."/>
            <person name="Kobayashi Y."/>
            <person name="Koetter P."/>
            <person name="Koningstein G."/>
            <person name="Krogh S."/>
            <person name="Kumano M."/>
            <person name="Kurita K."/>
            <person name="Lapidus A."/>
            <person name="Lardinois S."/>
            <person name="Lauber J."/>
            <person name="Lazarevic V."/>
            <person name="Lee S.-M."/>
            <person name="Levine A."/>
            <person name="Liu H."/>
            <person name="Masuda S."/>
            <person name="Mauel C."/>
            <person name="Medigue C."/>
            <person name="Medina N."/>
            <person name="Mellado R.P."/>
            <person name="Mizuno M."/>
            <person name="Moestl D."/>
            <person name="Nakai S."/>
            <person name="Noback M."/>
            <person name="Noone D."/>
            <person name="O'Reilly M."/>
            <person name="Ogawa K."/>
            <person name="Ogiwara A."/>
            <person name="Oudega B."/>
            <person name="Park S.-H."/>
            <person name="Parro V."/>
            <person name="Pohl T.M."/>
            <person name="Portetelle D."/>
            <person name="Porwollik S."/>
            <person name="Prescott A.M."/>
            <person name="Presecan E."/>
            <person name="Pujic P."/>
            <person name="Purnelle B."/>
            <person name="Rapoport G."/>
            <person name="Rey M."/>
            <person name="Reynolds S."/>
            <person name="Rieger M."/>
            <person name="Rivolta C."/>
            <person name="Rocha E."/>
            <person name="Roche B."/>
            <person name="Rose M."/>
            <person name="Sadaie Y."/>
            <person name="Sato T."/>
            <person name="Scanlan E."/>
            <person name="Schleich S."/>
            <person name="Schroeter R."/>
            <person name="Scoffone F."/>
            <person name="Sekiguchi J."/>
            <person name="Sekowska A."/>
            <person name="Seror S.J."/>
            <person name="Serror P."/>
            <person name="Shin B.-S."/>
            <person name="Soldo B."/>
            <person name="Sorokin A."/>
            <person name="Tacconi E."/>
            <person name="Takagi T."/>
            <person name="Takahashi H."/>
            <person name="Takemaru K."/>
            <person name="Takeuchi M."/>
            <person name="Tamakoshi A."/>
            <person name="Tanaka T."/>
            <person name="Terpstra P."/>
            <person name="Tognoni A."/>
            <person name="Tosato V."/>
            <person name="Uchiyama S."/>
            <person name="Vandenbol M."/>
            <person name="Vannier F."/>
            <person name="Vassarotti A."/>
            <person name="Viari A."/>
            <person name="Wambutt R."/>
            <person name="Wedler E."/>
            <person name="Wedler H."/>
            <person name="Weitzenegger T."/>
            <person name="Winters P."/>
            <person name="Wipat A."/>
            <person name="Yamamoto H."/>
            <person name="Yamane K."/>
            <person name="Yasumoto K."/>
            <person name="Yata K."/>
            <person name="Yoshida K."/>
            <person name="Yoshikawa H.-F."/>
            <person name="Zumstein E."/>
            <person name="Yoshikawa H."/>
            <person name="Danchin A."/>
        </authorList>
    </citation>
    <scope>NUCLEOTIDE SEQUENCE [LARGE SCALE GENOMIC DNA]</scope>
    <source>
        <strain>168</strain>
    </source>
</reference>
<proteinExistence type="predicted"/>
<gene>
    <name type="primary">xtrA</name>
    <name type="ordered locus">BSU12550</name>
</gene>
<evidence type="ECO:0000305" key="1"/>
<dbReference type="EMBL" id="Z70177">
    <property type="protein sequence ID" value="CAA94056.1"/>
    <property type="molecule type" value="Genomic_DNA"/>
</dbReference>
<dbReference type="EMBL" id="Z34287">
    <property type="status" value="NOT_ANNOTATED_CDS"/>
    <property type="molecule type" value="Genomic_DNA"/>
</dbReference>
<dbReference type="EMBL" id="AL009126">
    <property type="protein sequence ID" value="CAB13112.1"/>
    <property type="molecule type" value="Genomic_DNA"/>
</dbReference>
<dbReference type="PIR" id="B69735">
    <property type="entry name" value="B69735"/>
</dbReference>
<dbReference type="RefSeq" id="NP_389137.1">
    <property type="nucleotide sequence ID" value="NC_000964.3"/>
</dbReference>
<dbReference type="RefSeq" id="WP_003244900.1">
    <property type="nucleotide sequence ID" value="NZ_OZ025638.1"/>
</dbReference>
<dbReference type="FunCoup" id="P54344">
    <property type="interactions" value="220"/>
</dbReference>
<dbReference type="STRING" id="224308.BSU12550"/>
<dbReference type="PaxDb" id="224308-BSU12550"/>
<dbReference type="EnsemblBacteria" id="CAB13112">
    <property type="protein sequence ID" value="CAB13112"/>
    <property type="gene ID" value="BSU_12550"/>
</dbReference>
<dbReference type="GeneID" id="939839"/>
<dbReference type="KEGG" id="bsu:BSU12550"/>
<dbReference type="PATRIC" id="fig|224308.179.peg.1359"/>
<dbReference type="InParanoid" id="P54344"/>
<dbReference type="OrthoDB" id="2916351at2"/>
<dbReference type="BioCyc" id="BSUB:BSU12550-MONOMER"/>
<dbReference type="Proteomes" id="UP000001570">
    <property type="component" value="Chromosome"/>
</dbReference>
<dbReference type="InterPro" id="IPR035530">
    <property type="entry name" value="PBSX_XtrA"/>
</dbReference>
<dbReference type="Pfam" id="PF17356">
    <property type="entry name" value="PBSX_XtrA"/>
    <property type="match status" value="1"/>
</dbReference>
<feature type="chain" id="PRO_0000066053" description="Phage-like element PBSX protein XtrA">
    <location>
        <begin position="1"/>
        <end position="68"/>
    </location>
</feature>
<organism>
    <name type="scientific">Bacillus subtilis (strain 168)</name>
    <dbReference type="NCBI Taxonomy" id="224308"/>
    <lineage>
        <taxon>Bacteria</taxon>
        <taxon>Bacillati</taxon>
        <taxon>Bacillota</taxon>
        <taxon>Bacilli</taxon>
        <taxon>Bacillales</taxon>
        <taxon>Bacillaceae</taxon>
        <taxon>Bacillus</taxon>
    </lineage>
</organism>
<sequence length="68" mass="7750">MIHPKKLLHIDSVTLKSQLEDGKIRVIIVDGIKQEAWITEAPEHGKTLVETRKGDLARVEFEIGYKLN</sequence>
<accession>P54344</accession>
<comment type="similarity">
    <text evidence="1">To B.subtilis YqaO.</text>
</comment>
<comment type="sequence caution" evidence="1">
    <conflict type="frameshift">
        <sequence resource="EMBL" id="Z34287"/>
    </conflict>
</comment>
<protein>
    <recommendedName>
        <fullName>Phage-like element PBSX protein XtrA</fullName>
    </recommendedName>
</protein>
<name>XTRA_BACSU</name>
<keyword id="KW-1185">Reference proteome</keyword>